<accession>B1HT97</accession>
<reference key="1">
    <citation type="journal article" date="2008" name="J. Bacteriol.">
        <title>Complete genome sequence of the mosquitocidal bacterium Bacillus sphaericus C3-41 and comparison with those of closely related Bacillus species.</title>
        <authorList>
            <person name="Hu X."/>
            <person name="Fan W."/>
            <person name="Han B."/>
            <person name="Liu H."/>
            <person name="Zheng D."/>
            <person name="Li Q."/>
            <person name="Dong W."/>
            <person name="Yan J."/>
            <person name="Gao M."/>
            <person name="Berry C."/>
            <person name="Yuan Z."/>
        </authorList>
    </citation>
    <scope>NUCLEOTIDE SEQUENCE [LARGE SCALE GENOMIC DNA]</scope>
    <source>
        <strain>C3-41</strain>
    </source>
</reference>
<dbReference type="EC" id="1.1.1.94" evidence="1"/>
<dbReference type="EMBL" id="CP000817">
    <property type="protein sequence ID" value="ACA39513.1"/>
    <property type="molecule type" value="Genomic_DNA"/>
</dbReference>
<dbReference type="RefSeq" id="WP_012293609.1">
    <property type="nucleotide sequence ID" value="NC_010382.1"/>
</dbReference>
<dbReference type="SMR" id="B1HT97"/>
<dbReference type="EnsemblBacteria" id="ACA39513">
    <property type="protein sequence ID" value="ACA39513"/>
    <property type="gene ID" value="Bsph_1921"/>
</dbReference>
<dbReference type="KEGG" id="lsp:Bsph_1921"/>
<dbReference type="HOGENOM" id="CLU_033449_0_2_9"/>
<dbReference type="UniPathway" id="UPA00940"/>
<dbReference type="Proteomes" id="UP000002164">
    <property type="component" value="Chromosome"/>
</dbReference>
<dbReference type="GO" id="GO:0005829">
    <property type="term" value="C:cytosol"/>
    <property type="evidence" value="ECO:0007669"/>
    <property type="project" value="TreeGrafter"/>
</dbReference>
<dbReference type="GO" id="GO:0047952">
    <property type="term" value="F:glycerol-3-phosphate dehydrogenase [NAD(P)+] activity"/>
    <property type="evidence" value="ECO:0007669"/>
    <property type="project" value="UniProtKB-UniRule"/>
</dbReference>
<dbReference type="GO" id="GO:0051287">
    <property type="term" value="F:NAD binding"/>
    <property type="evidence" value="ECO:0007669"/>
    <property type="project" value="InterPro"/>
</dbReference>
<dbReference type="GO" id="GO:0005975">
    <property type="term" value="P:carbohydrate metabolic process"/>
    <property type="evidence" value="ECO:0007669"/>
    <property type="project" value="InterPro"/>
</dbReference>
<dbReference type="GO" id="GO:0046167">
    <property type="term" value="P:glycerol-3-phosphate biosynthetic process"/>
    <property type="evidence" value="ECO:0007669"/>
    <property type="project" value="UniProtKB-UniRule"/>
</dbReference>
<dbReference type="GO" id="GO:0046168">
    <property type="term" value="P:glycerol-3-phosphate catabolic process"/>
    <property type="evidence" value="ECO:0007669"/>
    <property type="project" value="InterPro"/>
</dbReference>
<dbReference type="GO" id="GO:0006650">
    <property type="term" value="P:glycerophospholipid metabolic process"/>
    <property type="evidence" value="ECO:0007669"/>
    <property type="project" value="UniProtKB-UniRule"/>
</dbReference>
<dbReference type="GO" id="GO:0008654">
    <property type="term" value="P:phospholipid biosynthetic process"/>
    <property type="evidence" value="ECO:0007669"/>
    <property type="project" value="UniProtKB-KW"/>
</dbReference>
<dbReference type="FunFam" id="1.10.1040.10:FF:000001">
    <property type="entry name" value="Glycerol-3-phosphate dehydrogenase [NAD(P)+]"/>
    <property type="match status" value="1"/>
</dbReference>
<dbReference type="FunFam" id="3.40.50.720:FF:000019">
    <property type="entry name" value="Glycerol-3-phosphate dehydrogenase [NAD(P)+]"/>
    <property type="match status" value="1"/>
</dbReference>
<dbReference type="Gene3D" id="1.10.1040.10">
    <property type="entry name" value="N-(1-d-carboxylethyl)-l-norvaline Dehydrogenase, domain 2"/>
    <property type="match status" value="1"/>
</dbReference>
<dbReference type="Gene3D" id="3.40.50.720">
    <property type="entry name" value="NAD(P)-binding Rossmann-like Domain"/>
    <property type="match status" value="1"/>
</dbReference>
<dbReference type="HAMAP" id="MF_00394">
    <property type="entry name" value="NAD_Glyc3P_dehydrog"/>
    <property type="match status" value="1"/>
</dbReference>
<dbReference type="InterPro" id="IPR008927">
    <property type="entry name" value="6-PGluconate_DH-like_C_sf"/>
</dbReference>
<dbReference type="InterPro" id="IPR013328">
    <property type="entry name" value="6PGD_dom2"/>
</dbReference>
<dbReference type="InterPro" id="IPR006168">
    <property type="entry name" value="G3P_DH_NAD-dep"/>
</dbReference>
<dbReference type="InterPro" id="IPR006109">
    <property type="entry name" value="G3P_DH_NAD-dep_C"/>
</dbReference>
<dbReference type="InterPro" id="IPR011128">
    <property type="entry name" value="G3P_DH_NAD-dep_N"/>
</dbReference>
<dbReference type="InterPro" id="IPR036291">
    <property type="entry name" value="NAD(P)-bd_dom_sf"/>
</dbReference>
<dbReference type="NCBIfam" id="NF000940">
    <property type="entry name" value="PRK00094.1-2"/>
    <property type="match status" value="1"/>
</dbReference>
<dbReference type="NCBIfam" id="NF000941">
    <property type="entry name" value="PRK00094.1-3"/>
    <property type="match status" value="1"/>
</dbReference>
<dbReference type="NCBIfam" id="NF000942">
    <property type="entry name" value="PRK00094.1-4"/>
    <property type="match status" value="1"/>
</dbReference>
<dbReference type="PANTHER" id="PTHR11728">
    <property type="entry name" value="GLYCEROL-3-PHOSPHATE DEHYDROGENASE"/>
    <property type="match status" value="1"/>
</dbReference>
<dbReference type="PANTHER" id="PTHR11728:SF1">
    <property type="entry name" value="GLYCEROL-3-PHOSPHATE DEHYDROGENASE [NAD(+)] 2, CHLOROPLASTIC"/>
    <property type="match status" value="1"/>
</dbReference>
<dbReference type="Pfam" id="PF07479">
    <property type="entry name" value="NAD_Gly3P_dh_C"/>
    <property type="match status" value="1"/>
</dbReference>
<dbReference type="Pfam" id="PF01210">
    <property type="entry name" value="NAD_Gly3P_dh_N"/>
    <property type="match status" value="1"/>
</dbReference>
<dbReference type="PIRSF" id="PIRSF000114">
    <property type="entry name" value="Glycerol-3-P_dh"/>
    <property type="match status" value="1"/>
</dbReference>
<dbReference type="PRINTS" id="PR00077">
    <property type="entry name" value="GPDHDRGNASE"/>
</dbReference>
<dbReference type="SUPFAM" id="SSF48179">
    <property type="entry name" value="6-phosphogluconate dehydrogenase C-terminal domain-like"/>
    <property type="match status" value="1"/>
</dbReference>
<dbReference type="SUPFAM" id="SSF51735">
    <property type="entry name" value="NAD(P)-binding Rossmann-fold domains"/>
    <property type="match status" value="1"/>
</dbReference>
<dbReference type="PROSITE" id="PS00957">
    <property type="entry name" value="NAD_G3PDH"/>
    <property type="match status" value="1"/>
</dbReference>
<feature type="chain" id="PRO_1000123164" description="Glycerol-3-phosphate dehydrogenase [NAD(P)+]">
    <location>
        <begin position="1"/>
        <end position="338"/>
    </location>
</feature>
<feature type="active site" description="Proton acceptor" evidence="1">
    <location>
        <position position="192"/>
    </location>
</feature>
<feature type="binding site" evidence="1">
    <location>
        <position position="11"/>
    </location>
    <ligand>
        <name>NADPH</name>
        <dbReference type="ChEBI" id="CHEBI:57783"/>
    </ligand>
</feature>
<feature type="binding site" evidence="1">
    <location>
        <position position="12"/>
    </location>
    <ligand>
        <name>NADPH</name>
        <dbReference type="ChEBI" id="CHEBI:57783"/>
    </ligand>
</feature>
<feature type="binding site" evidence="1">
    <location>
        <position position="32"/>
    </location>
    <ligand>
        <name>NADPH</name>
        <dbReference type="ChEBI" id="CHEBI:57783"/>
    </ligand>
</feature>
<feature type="binding site" evidence="1">
    <location>
        <position position="33"/>
    </location>
    <ligand>
        <name>NADPH</name>
        <dbReference type="ChEBI" id="CHEBI:57783"/>
    </ligand>
</feature>
<feature type="binding site" evidence="1">
    <location>
        <position position="106"/>
    </location>
    <ligand>
        <name>NADPH</name>
        <dbReference type="ChEBI" id="CHEBI:57783"/>
    </ligand>
</feature>
<feature type="binding site" evidence="1">
    <location>
        <position position="106"/>
    </location>
    <ligand>
        <name>sn-glycerol 3-phosphate</name>
        <dbReference type="ChEBI" id="CHEBI:57597"/>
    </ligand>
</feature>
<feature type="binding site" evidence="1">
    <location>
        <position position="137"/>
    </location>
    <ligand>
        <name>sn-glycerol 3-phosphate</name>
        <dbReference type="ChEBI" id="CHEBI:57597"/>
    </ligand>
</feature>
<feature type="binding site" evidence="1">
    <location>
        <position position="139"/>
    </location>
    <ligand>
        <name>sn-glycerol 3-phosphate</name>
        <dbReference type="ChEBI" id="CHEBI:57597"/>
    </ligand>
</feature>
<feature type="binding site" evidence="1">
    <location>
        <position position="141"/>
    </location>
    <ligand>
        <name>NADPH</name>
        <dbReference type="ChEBI" id="CHEBI:57783"/>
    </ligand>
</feature>
<feature type="binding site" evidence="1">
    <location>
        <position position="192"/>
    </location>
    <ligand>
        <name>sn-glycerol 3-phosphate</name>
        <dbReference type="ChEBI" id="CHEBI:57597"/>
    </ligand>
</feature>
<feature type="binding site" evidence="1">
    <location>
        <position position="245"/>
    </location>
    <ligand>
        <name>sn-glycerol 3-phosphate</name>
        <dbReference type="ChEBI" id="CHEBI:57597"/>
    </ligand>
</feature>
<feature type="binding site" evidence="1">
    <location>
        <position position="255"/>
    </location>
    <ligand>
        <name>sn-glycerol 3-phosphate</name>
        <dbReference type="ChEBI" id="CHEBI:57597"/>
    </ligand>
</feature>
<feature type="binding site" evidence="1">
    <location>
        <position position="256"/>
    </location>
    <ligand>
        <name>NADPH</name>
        <dbReference type="ChEBI" id="CHEBI:57783"/>
    </ligand>
</feature>
<feature type="binding site" evidence="1">
    <location>
        <position position="256"/>
    </location>
    <ligand>
        <name>sn-glycerol 3-phosphate</name>
        <dbReference type="ChEBI" id="CHEBI:57597"/>
    </ligand>
</feature>
<feature type="binding site" evidence="1">
    <location>
        <position position="257"/>
    </location>
    <ligand>
        <name>sn-glycerol 3-phosphate</name>
        <dbReference type="ChEBI" id="CHEBI:57597"/>
    </ligand>
</feature>
<feature type="binding site" evidence="1">
    <location>
        <position position="280"/>
    </location>
    <ligand>
        <name>NADPH</name>
        <dbReference type="ChEBI" id="CHEBI:57783"/>
    </ligand>
</feature>
<feature type="binding site" evidence="1">
    <location>
        <position position="282"/>
    </location>
    <ligand>
        <name>NADPH</name>
        <dbReference type="ChEBI" id="CHEBI:57783"/>
    </ligand>
</feature>
<gene>
    <name evidence="1" type="primary">gpsA</name>
    <name type="ordered locus">Bsph_1921</name>
</gene>
<proteinExistence type="inferred from homology"/>
<evidence type="ECO:0000255" key="1">
    <source>
        <dbReference type="HAMAP-Rule" id="MF_00394"/>
    </source>
</evidence>
<protein>
    <recommendedName>
        <fullName evidence="1">Glycerol-3-phosphate dehydrogenase [NAD(P)+]</fullName>
        <ecNumber evidence="1">1.1.1.94</ecNumber>
    </recommendedName>
    <alternativeName>
        <fullName evidence="1">NAD(P)(+)-dependent glycerol-3-phosphate dehydrogenase</fullName>
    </alternativeName>
    <alternativeName>
        <fullName evidence="1">NAD(P)H-dependent dihydroxyacetone-phosphate reductase</fullName>
    </alternativeName>
</protein>
<keyword id="KW-0963">Cytoplasm</keyword>
<keyword id="KW-0444">Lipid biosynthesis</keyword>
<keyword id="KW-0443">Lipid metabolism</keyword>
<keyword id="KW-0520">NAD</keyword>
<keyword id="KW-0521">NADP</keyword>
<keyword id="KW-0547">Nucleotide-binding</keyword>
<keyword id="KW-0560">Oxidoreductase</keyword>
<keyword id="KW-0594">Phospholipid biosynthesis</keyword>
<keyword id="KW-1208">Phospholipid metabolism</keyword>
<name>GPDA_LYSSC</name>
<comment type="function">
    <text evidence="1">Catalyzes the reduction of the glycolytic intermediate dihydroxyacetone phosphate (DHAP) to sn-glycerol 3-phosphate (G3P), the key precursor for phospholipid synthesis.</text>
</comment>
<comment type="catalytic activity">
    <reaction evidence="1">
        <text>sn-glycerol 3-phosphate + NAD(+) = dihydroxyacetone phosphate + NADH + H(+)</text>
        <dbReference type="Rhea" id="RHEA:11092"/>
        <dbReference type="ChEBI" id="CHEBI:15378"/>
        <dbReference type="ChEBI" id="CHEBI:57540"/>
        <dbReference type="ChEBI" id="CHEBI:57597"/>
        <dbReference type="ChEBI" id="CHEBI:57642"/>
        <dbReference type="ChEBI" id="CHEBI:57945"/>
        <dbReference type="EC" id="1.1.1.94"/>
    </reaction>
    <physiologicalReaction direction="right-to-left" evidence="1">
        <dbReference type="Rhea" id="RHEA:11094"/>
    </physiologicalReaction>
</comment>
<comment type="catalytic activity">
    <reaction evidence="1">
        <text>sn-glycerol 3-phosphate + NADP(+) = dihydroxyacetone phosphate + NADPH + H(+)</text>
        <dbReference type="Rhea" id="RHEA:11096"/>
        <dbReference type="ChEBI" id="CHEBI:15378"/>
        <dbReference type="ChEBI" id="CHEBI:57597"/>
        <dbReference type="ChEBI" id="CHEBI:57642"/>
        <dbReference type="ChEBI" id="CHEBI:57783"/>
        <dbReference type="ChEBI" id="CHEBI:58349"/>
        <dbReference type="EC" id="1.1.1.94"/>
    </reaction>
    <physiologicalReaction direction="right-to-left" evidence="1">
        <dbReference type="Rhea" id="RHEA:11098"/>
    </physiologicalReaction>
</comment>
<comment type="pathway">
    <text evidence="1">Membrane lipid metabolism; glycerophospholipid metabolism.</text>
</comment>
<comment type="subcellular location">
    <subcellularLocation>
        <location evidence="1">Cytoplasm</location>
    </subcellularLocation>
</comment>
<comment type="similarity">
    <text evidence="1">Belongs to the NAD-dependent glycerol-3-phosphate dehydrogenase family.</text>
</comment>
<sequence>MEKVCVLGAGSWGSALAMVLAENGHDTLVWTHRAEQAEEINRMHTNKKYLPETVLPTNLHATSDIAKAATHAETIVVAVPTKAIREVCEKLTAELTKKVLFVHVSKGIEPDSLKRISEILAESLPAEKVDEIVVLSGPSHAEEVVLHHPTTVTAACADIDAAEKVQDLFMNQFFRVYTNDDVIGVEIGGALKNVIALAAGITDGLNYGDNAKAALITRGLAEITRLGVKMGGNPFTFSGLTGMGDLIVTCTSVHSRNWRAGNMLGQGMKLQEVLDQMGMVVEGVRTTKAAYQLAEKYGVAMPISTELYSVLFNDVEPKVAVDALMMRMKKREIDEMKH</sequence>
<organism>
    <name type="scientific">Lysinibacillus sphaericus (strain C3-41)</name>
    <dbReference type="NCBI Taxonomy" id="444177"/>
    <lineage>
        <taxon>Bacteria</taxon>
        <taxon>Bacillati</taxon>
        <taxon>Bacillota</taxon>
        <taxon>Bacilli</taxon>
        <taxon>Bacillales</taxon>
        <taxon>Bacillaceae</taxon>
        <taxon>Lysinibacillus</taxon>
    </lineage>
</organism>